<feature type="chain" id="PRO_0000055185" description="RNA helicase NPH-II">
    <location>
        <begin position="1"/>
        <end position="676"/>
    </location>
</feature>
<feature type="domain" description="Helicase ATP-binding" evidence="1">
    <location>
        <begin position="172"/>
        <end position="347"/>
    </location>
</feature>
<feature type="domain" description="Helicase C-terminal" evidence="2">
    <location>
        <begin position="366"/>
        <end position="535"/>
    </location>
</feature>
<feature type="short sequence motif" description="DEXH box">
    <location>
        <begin position="296"/>
        <end position="299"/>
    </location>
</feature>
<feature type="binding site" evidence="1">
    <location>
        <begin position="185"/>
        <end position="192"/>
    </location>
    <ligand>
        <name>ATP</name>
        <dbReference type="ChEBI" id="CHEBI:30616"/>
    </ligand>
</feature>
<feature type="mutagenesis site" description="Inactivates ATPase and helicase activities." evidence="9">
    <original>K</original>
    <variation>A</variation>
    <location>
        <position position="191"/>
    </location>
</feature>
<feature type="mutagenesis site" description="Inactivates ATPase and helicase activities." evidence="9">
    <original>T</original>
    <variation>A</variation>
    <location>
        <position position="192"/>
    </location>
</feature>
<feature type="mutagenesis site" description="Inactivates ATPase and helicase activities." evidence="9">
    <original>R</original>
    <variation>A</variation>
    <location>
        <position position="229"/>
    </location>
</feature>
<feature type="mutagenesis site" description="Strongly reduces NTPase and helicase activities." evidence="6">
    <original>D</original>
    <variation>A</variation>
    <location>
        <position position="296"/>
    </location>
</feature>
<feature type="mutagenesis site" description="Strongly reduces NTPase and helicase activities." evidence="6">
    <original>E</original>
    <variation>A</variation>
    <location>
        <position position="297"/>
    </location>
</feature>
<feature type="mutagenesis site" description="Activates NTPase without need for a nucleic acid cofactor." evidence="6">
    <original>H</original>
    <variation>A</variation>
    <location>
        <position position="299"/>
    </location>
</feature>
<feature type="mutagenesis site" description="Inactivates ATPase and helicase activities.">
    <original>E</original>
    <variation>A</variation>
    <location>
        <position position="300"/>
    </location>
</feature>
<feature type="mutagenesis site" description="Defect in RNA unwinding." evidence="9">
    <original>T</original>
    <variation>A</variation>
    <location>
        <position position="326"/>
    </location>
</feature>
<feature type="mutagenesis site" description="Defect in RNA unwinding." evidence="9">
    <original>T</original>
    <variation>A</variation>
    <location>
        <position position="328"/>
    </location>
</feature>
<feature type="mutagenesis site" description="Defect in ATP hydrolysis and RNA unwinding." evidence="7">
    <original>Q</original>
    <variation>A</variation>
    <location>
        <position position="491"/>
    </location>
</feature>
<feature type="mutagenesis site" description="Defect in ATP hydrolysis and RNA unwinding." evidence="7">
    <original>R</original>
    <variation>A</variation>
    <location>
        <position position="492"/>
    </location>
</feature>
<feature type="mutagenesis site" description="Defect in ATP hydrolysis and RNA unwinding." evidence="7">
    <original>G</original>
    <variation>A</variation>
    <location>
        <position position="494"/>
    </location>
</feature>
<feature type="mutagenesis site" description="Defect in ATP hydrolysis and RNA unwinding." evidence="7">
    <original>R</original>
    <variation>A</variation>
    <location>
        <position position="495"/>
    </location>
</feature>
<feature type="mutagenesis site" description="Defect in ATP hydrolysis and RNA unwinding." evidence="7">
    <original>G</original>
    <variation>A</variation>
    <location>
        <position position="497"/>
    </location>
</feature>
<feature type="mutagenesis site" description="Defect in ATP hydrolysis and RNA unwinding." evidence="7">
    <original>R</original>
    <variation>A</variation>
    <location>
        <position position="498"/>
    </location>
</feature>
<feature type="mutagenesis site" description="Defect in ATP hydrolysis and RNA unwinding." evidence="7">
    <original>G</original>
    <variation>A</variation>
    <location>
        <position position="502"/>
    </location>
</feature>
<sequence>MEKNLPDIFFFPNCVNVFSYKYSQDEFSNMSKTERDSFSLAVFPVIKHRWHNAHVVKHKGIYKVSTEARGKKVSPPSLGKPAHINLTAKQYIYSEHTISFECYSFLKCITNTEINSFDEYILRGLLEAGNSLQIFSNSVGKRTDTIGVLGNKYPFSKIPLASLTPKAQREIFSAWISHRPVVLTGGTGVGKTSQVPKLLLWFNYLFGGFSTLDKITNFHERPVILSLPRIALVRLHSNTILKSLGFKVLDGSPISLRYGSIPEELINKQPKKYGIVFSTHKLSLTKLFSYGTLIIDEVHEHDQIGDIIIAVARKHHTKIDSMFLMTATLEDDRERLKVFLPNPAFIHIPGDTLFKISEVFIHNKINPSSRMAYIEEEKRNLVTAIQMYTPPDGSSGIVFVASVAQCHEYKSYLEKRLPYDMYIIHGKVLDIDEILEKVYSSPNVSIIISTPYLESSVTIRNVTHIYDMGKVFVPAPFGGSQEFISKSMRDQRKGRVGRVNPGTYVYFYDLSYMKSIQRIDSEFLHNYILYANKFNLTLPEDLFIIPTNLDILWRTKEYIDSFDISTETWNKLLSNYYMKMIEYAKLYVLSPILAEELDNFERTGELTSIVREAILSLNLRIKILNFKHKDDDTYIHFCKILFGVYNGTNATIYYHRPLTGYMNMISDTIFVPVDNN</sequence>
<dbReference type="EC" id="3.6.4.13"/>
<dbReference type="EMBL" id="J03399">
    <property type="protein sequence ID" value="AAB59810.1"/>
    <property type="molecule type" value="Genomic_DNA"/>
</dbReference>
<dbReference type="EMBL" id="AY243312">
    <property type="protein sequence ID" value="AAO89356.1"/>
    <property type="molecule type" value="Genomic_DNA"/>
</dbReference>
<dbReference type="PIR" id="B38497">
    <property type="entry name" value="WZVZI8"/>
</dbReference>
<dbReference type="RefSeq" id="YP_232959.1">
    <property type="nucleotide sequence ID" value="NC_006998.1"/>
</dbReference>
<dbReference type="SMR" id="P12927"/>
<dbReference type="DNASU" id="3707610"/>
<dbReference type="GeneID" id="3707610"/>
<dbReference type="KEGG" id="vg:3707610"/>
<dbReference type="Proteomes" id="UP000000344">
    <property type="component" value="Genome"/>
</dbReference>
<dbReference type="GO" id="GO:0044423">
    <property type="term" value="C:virion component"/>
    <property type="evidence" value="ECO:0007669"/>
    <property type="project" value="UniProtKB-KW"/>
</dbReference>
<dbReference type="GO" id="GO:0005524">
    <property type="term" value="F:ATP binding"/>
    <property type="evidence" value="ECO:0007669"/>
    <property type="project" value="UniProtKB-KW"/>
</dbReference>
<dbReference type="GO" id="GO:0016887">
    <property type="term" value="F:ATP hydrolysis activity"/>
    <property type="evidence" value="ECO:0007669"/>
    <property type="project" value="RHEA"/>
</dbReference>
<dbReference type="GO" id="GO:0003723">
    <property type="term" value="F:RNA binding"/>
    <property type="evidence" value="ECO:0007669"/>
    <property type="project" value="TreeGrafter"/>
</dbReference>
<dbReference type="GO" id="GO:0003724">
    <property type="term" value="F:RNA helicase activity"/>
    <property type="evidence" value="ECO:0007669"/>
    <property type="project" value="UniProtKB-EC"/>
</dbReference>
<dbReference type="Gene3D" id="3.40.50.300">
    <property type="entry name" value="P-loop containing nucleotide triphosphate hydrolases"/>
    <property type="match status" value="2"/>
</dbReference>
<dbReference type="InterPro" id="IPR011545">
    <property type="entry name" value="DEAD/DEAH_box_helicase_dom"/>
</dbReference>
<dbReference type="InterPro" id="IPR002464">
    <property type="entry name" value="DNA/RNA_helicase_DEAH_CS"/>
</dbReference>
<dbReference type="InterPro" id="IPR014001">
    <property type="entry name" value="Helicase_ATP-bd"/>
</dbReference>
<dbReference type="InterPro" id="IPR001650">
    <property type="entry name" value="Helicase_C-like"/>
</dbReference>
<dbReference type="InterPro" id="IPR021892">
    <property type="entry name" value="NPH-II"/>
</dbReference>
<dbReference type="InterPro" id="IPR027417">
    <property type="entry name" value="P-loop_NTPase"/>
</dbReference>
<dbReference type="PANTHER" id="PTHR18934">
    <property type="entry name" value="ATP-DEPENDENT RNA HELICASE"/>
    <property type="match status" value="1"/>
</dbReference>
<dbReference type="PANTHER" id="PTHR18934:SF99">
    <property type="entry name" value="ATP-DEPENDENT RNA HELICASE DHX37-RELATED"/>
    <property type="match status" value="1"/>
</dbReference>
<dbReference type="Pfam" id="PF00270">
    <property type="entry name" value="DEAD"/>
    <property type="match status" value="1"/>
</dbReference>
<dbReference type="Pfam" id="PF00271">
    <property type="entry name" value="Helicase_C"/>
    <property type="match status" value="1"/>
</dbReference>
<dbReference type="Pfam" id="PF12011">
    <property type="entry name" value="NPH-II"/>
    <property type="match status" value="1"/>
</dbReference>
<dbReference type="SMART" id="SM00487">
    <property type="entry name" value="DEXDc"/>
    <property type="match status" value="1"/>
</dbReference>
<dbReference type="SMART" id="SM00490">
    <property type="entry name" value="HELICc"/>
    <property type="match status" value="1"/>
</dbReference>
<dbReference type="SUPFAM" id="SSF52540">
    <property type="entry name" value="P-loop containing nucleoside triphosphate hydrolases"/>
    <property type="match status" value="1"/>
</dbReference>
<dbReference type="PROSITE" id="PS00690">
    <property type="entry name" value="DEAH_ATP_HELICASE"/>
    <property type="match status" value="1"/>
</dbReference>
<dbReference type="PROSITE" id="PS51192">
    <property type="entry name" value="HELICASE_ATP_BIND_1"/>
    <property type="match status" value="1"/>
</dbReference>
<dbReference type="PROSITE" id="PS51194">
    <property type="entry name" value="HELICASE_CTER"/>
    <property type="match status" value="1"/>
</dbReference>
<reference key="1">
    <citation type="journal article" date="1991" name="Virology">
        <title>Genetic and molecular biological characterization of a vaccinia virus temperature-sensitive complementation group affecting a virion component.</title>
        <authorList>
            <person name="Fathi Z."/>
            <person name="Condit R.C."/>
        </authorList>
    </citation>
    <scope>NUCLEOTIDE SEQUENCE [GENOMIC DNA]</scope>
    <scope>INDUCTION</scope>
</reference>
<reference key="2">
    <citation type="submission" date="2003-02" db="EMBL/GenBank/DDBJ databases">
        <title>Sequencing of the coding region of Vaccinia-WR to an average 9-fold redundancy and an error rate of 0.16/10kb.</title>
        <authorList>
            <person name="Esposito J.J."/>
            <person name="Frace A.M."/>
            <person name="Sammons S.A."/>
            <person name="Olsen-Rasmussen M."/>
            <person name="Osborne J."/>
            <person name="Wohlhueter R."/>
        </authorList>
    </citation>
    <scope>NUCLEOTIDE SEQUENCE [LARGE SCALE GENOMIC DNA]</scope>
</reference>
<reference key="3">
    <citation type="journal article" date="1974" name="J. Biol. Chem.">
        <title>Two nucleid acid-dependent nucleoside triphosphate phosphohydrolases from vaccinia virus. Purification and characterization.</title>
        <authorList>
            <person name="Paolette E."/>
            <person name="Rosemond-Hornbeak H."/>
            <person name="Moss B."/>
        </authorList>
    </citation>
    <scope>SUBCELLULAR LOCATION</scope>
</reference>
<reference key="4">
    <citation type="journal article" date="1988" name="J. Virol.">
        <title>Sequence and transcriptional analysis of the vaccinia virus HindIII I fragment.</title>
        <authorList>
            <person name="Schmitt J.F.C."/>
            <person name="Stunnenberg H.G."/>
        </authorList>
    </citation>
    <scope>NUCLEOTIDE SEQUENCE [GENOMIC DNA] OF 1-99</scope>
</reference>
<reference key="5">
    <citation type="journal article" date="1992" name="J. Gen. Virol.">
        <title>Vaccinia virus encodes four putative DNA and/or RNA helicases distantly related to each other.</title>
        <authorList>
            <person name="Koonin E.V."/>
            <person name="Senkevich T.G."/>
        </authorList>
    </citation>
    <scope>SIMILARITY TO HELICASES</scope>
</reference>
<reference key="6">
    <citation type="journal article" date="1992" name="Proc. Natl. Acad. Sci. U.S.A.">
        <title>Vaccinia virus RNA helicase: an essential enzyme related to the DE-H family of RNA-dependent NTPases.</title>
        <authorList>
            <person name="Shuman S."/>
        </authorList>
    </citation>
    <scope>FUNCTION</scope>
    <scope>SUBUNIT</scope>
</reference>
<reference key="7">
    <citation type="journal article" date="1996" name="J. Virol.">
        <title>Vaccinia virions lacking the RNA helicase nucleoside triphosphate phosphohydrolase II are defective in early transcription.</title>
        <authorList>
            <person name="Gross C.H."/>
            <person name="Shuman S."/>
        </authorList>
    </citation>
    <scope>FUNCTION</scope>
</reference>
<reference key="8">
    <citation type="journal article" date="1998" name="J. Virol.">
        <title>The nucleoside triphosphatase and helicase activities of vaccinia virus NPH-II are essential for virus replication.</title>
        <authorList>
            <person name="Gross C.H."/>
            <person name="Shuman S."/>
        </authorList>
    </citation>
    <scope>ENZYME ACTIVITY</scope>
    <scope>MUTAGENESIS OF LYS-191; THR-192; ARG-229; THR-326 AND THR-328</scope>
</reference>
<reference key="9">
    <citation type="journal article" date="1995" name="J. Virol.">
        <title>Mutational analysis of vaccinia virus nucleoside triphosphate phosphohydrolase II, a DExH box RNA helicase.</title>
        <authorList>
            <person name="Gross C.H."/>
            <person name="Shuman S."/>
        </authorList>
    </citation>
    <scope>MUTAGENESIS OF ASP-296; GLU-297 AND HIS-299</scope>
</reference>
<reference key="10">
    <citation type="journal article" date="1996" name="J. Virol.">
        <title>The QRxGRxGRxxxG motif of the vaccinia virus DExH box RNA helicase NPH-II is required for ATP hydrolysis and RNA unwinding but not for RNA binding.</title>
        <authorList>
            <person name="Gross C.H."/>
            <person name="Shuman S."/>
        </authorList>
    </citation>
    <scope>MUTAGENESIS OF GLN-491; ARG-492; GLY-494; ARG-495; GLY-497; ARG-498 AND GLY-502</scope>
</reference>
<reference key="11">
    <citation type="journal article" date="2000" name="Nature">
        <title>The DExH protein NPH-II is a processive and directional motor for unwinding RNA.</title>
        <authorList>
            <person name="Jankowsky E."/>
            <person name="Gross C.H."/>
            <person name="Shuman S."/>
            <person name="Pyle A.M."/>
        </authorList>
    </citation>
    <scope>CHARACTERIZATION</scope>
</reference>
<reference key="12">
    <citation type="journal article" date="2010" name="J. Biol. Chem.">
        <title>The NPH-II helicase displays efficient DNA x RNA helicase activity and a pronounced purine sequence bias.</title>
        <authorList>
            <person name="Taylor S.D."/>
            <person name="Solem A."/>
            <person name="Kawaoka J."/>
            <person name="Pyle A.M."/>
        </authorList>
    </citation>
    <scope>CHARACTERIZATION</scope>
</reference>
<reference key="13">
    <citation type="journal article" date="2015" name="J. Virol.">
        <title>Deciphering poxvirus gene expression by RNA sequencing and ribosome profiling.</title>
        <authorList>
            <person name="Yang Z."/>
            <person name="Cao S."/>
            <person name="Martens C.A."/>
            <person name="Porcella S.F."/>
            <person name="Xie Z."/>
            <person name="Ma M."/>
            <person name="Shen B."/>
            <person name="Moss B."/>
        </authorList>
    </citation>
    <scope>INDUCTION</scope>
</reference>
<gene>
    <name type="primary">OPG084</name>
    <name type="synonym">NPH2</name>
    <name type="ordered locus">VACWR077</name>
    <name type="ORF">I8R</name>
</gene>
<evidence type="ECO:0000255" key="1">
    <source>
        <dbReference type="PROSITE-ProRule" id="PRU00541"/>
    </source>
</evidence>
<evidence type="ECO:0000255" key="2">
    <source>
        <dbReference type="PROSITE-ProRule" id="PRU00542"/>
    </source>
</evidence>
<evidence type="ECO:0000269" key="3">
    <source>
    </source>
</evidence>
<evidence type="ECO:0000269" key="4">
    <source>
    </source>
</evidence>
<evidence type="ECO:0000269" key="5">
    <source>
    </source>
</evidence>
<evidence type="ECO:0000269" key="6">
    <source>
    </source>
</evidence>
<evidence type="ECO:0000269" key="7">
    <source>
    </source>
</evidence>
<evidence type="ECO:0000269" key="8">
    <source>
    </source>
</evidence>
<evidence type="ECO:0000269" key="9">
    <source>
    </source>
</evidence>
<evidence type="ECO:0000305" key="10"/>
<proteinExistence type="evidence at protein level"/>
<keyword id="KW-0067">ATP-binding</keyword>
<keyword id="KW-0347">Helicase</keyword>
<keyword id="KW-0378">Hydrolase</keyword>
<keyword id="KW-0547">Nucleotide-binding</keyword>
<keyword id="KW-1185">Reference proteome</keyword>
<keyword id="KW-0804">Transcription</keyword>
<keyword id="KW-0946">Virion</keyword>
<organismHost>
    <name type="scientific">Bos taurus</name>
    <name type="common">Bovine</name>
    <dbReference type="NCBI Taxonomy" id="9913"/>
</organismHost>
<name>NPH2_VACCW</name>
<protein>
    <recommendedName>
        <fullName>RNA helicase NPH-II</fullName>
        <ecNumber>3.6.4.13</ecNumber>
    </recommendedName>
    <alternativeName>
        <fullName>Nucleoside triphosphatase II</fullName>
        <shortName>NTPase II</shortName>
    </alternativeName>
    <alternativeName>
        <fullName>Nucleoside triphosphate phosphohydrolase II</fullName>
        <shortName>NPH II</shortName>
    </alternativeName>
    <alternativeName>
        <fullName>RNA helicase I8</fullName>
    </alternativeName>
</protein>
<organism>
    <name type="scientific">Vaccinia virus (strain Western Reserve)</name>
    <name type="common">VACV</name>
    <name type="synonym">Vaccinia virus (strain WR)</name>
    <dbReference type="NCBI Taxonomy" id="10254"/>
    <lineage>
        <taxon>Viruses</taxon>
        <taxon>Varidnaviria</taxon>
        <taxon>Bamfordvirae</taxon>
        <taxon>Nucleocytoviricota</taxon>
        <taxon>Pokkesviricetes</taxon>
        <taxon>Chitovirales</taxon>
        <taxon>Poxviridae</taxon>
        <taxon>Chordopoxvirinae</taxon>
        <taxon>Orthopoxvirus</taxon>
        <taxon>Vaccinia virus</taxon>
    </lineage>
</organism>
<comment type="function">
    <text evidence="3 8">NTP-dependent helicase that catalyzes unidirectional unwinding of 3'tailed duplex RNAs and plays an important role during transcription of early mRNAs, presumably by preventing R-loop formation behind the elongating RNA polymerase. Might also play a role in the export of newly synthesized mRNA chains out of the core into the cytoplasm. Required for replication and propagation of viral particles.</text>
</comment>
<comment type="catalytic activity">
    <reaction evidence="9">
        <text>ATP + H2O = ADP + phosphate + H(+)</text>
        <dbReference type="Rhea" id="RHEA:13065"/>
        <dbReference type="ChEBI" id="CHEBI:15377"/>
        <dbReference type="ChEBI" id="CHEBI:15378"/>
        <dbReference type="ChEBI" id="CHEBI:30616"/>
        <dbReference type="ChEBI" id="CHEBI:43474"/>
        <dbReference type="ChEBI" id="CHEBI:456216"/>
        <dbReference type="EC" id="3.6.4.13"/>
    </reaction>
</comment>
<comment type="subunit">
    <text evidence="3">Monomer.</text>
</comment>
<comment type="subcellular location">
    <subcellularLocation>
        <location evidence="5">Virion</location>
    </subcellularLocation>
    <text>Localizes to the virion core.</text>
</comment>
<comment type="induction">
    <text evidence="4">Expressed in the intermediate phase of the viral replicative cycle.</text>
</comment>
<comment type="similarity">
    <text evidence="10">Belongs to the DEAD box helicase family. DEAH subfamily.</text>
</comment>
<accession>P12927</accession>
<accession>Q76ZU5</accession>